<dbReference type="EC" id="2.7.7.6" evidence="1"/>
<dbReference type="EMBL" id="X57145">
    <property type="protein sequence ID" value="CAA40431.1"/>
    <property type="molecule type" value="Genomic_DNA"/>
</dbReference>
<dbReference type="PIR" id="S03575">
    <property type="entry name" value="S03575"/>
</dbReference>
<dbReference type="SMR" id="P15349"/>
<dbReference type="GO" id="GO:0005737">
    <property type="term" value="C:cytoplasm"/>
    <property type="evidence" value="ECO:0007669"/>
    <property type="project" value="UniProtKB-SubCell"/>
</dbReference>
<dbReference type="GO" id="GO:0000428">
    <property type="term" value="C:DNA-directed RNA polymerase complex"/>
    <property type="evidence" value="ECO:0007669"/>
    <property type="project" value="UniProtKB-KW"/>
</dbReference>
<dbReference type="GO" id="GO:0003677">
    <property type="term" value="F:DNA binding"/>
    <property type="evidence" value="ECO:0007669"/>
    <property type="project" value="UniProtKB-KW"/>
</dbReference>
<dbReference type="GO" id="GO:0003899">
    <property type="term" value="F:DNA-directed RNA polymerase activity"/>
    <property type="evidence" value="ECO:0007669"/>
    <property type="project" value="UniProtKB-EC"/>
</dbReference>
<dbReference type="GO" id="GO:0006351">
    <property type="term" value="P:DNA-templated transcription"/>
    <property type="evidence" value="ECO:0007669"/>
    <property type="project" value="InterPro"/>
</dbReference>
<dbReference type="Gene3D" id="1.10.132.30">
    <property type="match status" value="1"/>
</dbReference>
<dbReference type="Gene3D" id="6.10.250.2940">
    <property type="match status" value="1"/>
</dbReference>
<dbReference type="Gene3D" id="6.20.50.80">
    <property type="match status" value="1"/>
</dbReference>
<dbReference type="Gene3D" id="1.10.274.100">
    <property type="entry name" value="RNA polymerase Rpb1, domain 3"/>
    <property type="match status" value="1"/>
</dbReference>
<dbReference type="InterPro" id="IPR045867">
    <property type="entry name" value="DNA-dir_RpoC_beta_prime"/>
</dbReference>
<dbReference type="InterPro" id="IPR007066">
    <property type="entry name" value="RNA_pol_Rpb1_3"/>
</dbReference>
<dbReference type="InterPro" id="IPR042102">
    <property type="entry name" value="RNA_pol_Rpb1_3_sf"/>
</dbReference>
<dbReference type="InterPro" id="IPR007083">
    <property type="entry name" value="RNA_pol_Rpb1_4"/>
</dbReference>
<dbReference type="InterPro" id="IPR007081">
    <property type="entry name" value="RNA_pol_Rpb1_5"/>
</dbReference>
<dbReference type="InterPro" id="IPR038120">
    <property type="entry name" value="Rpb1_funnel_sf"/>
</dbReference>
<dbReference type="PANTHER" id="PTHR19376">
    <property type="entry name" value="DNA-DIRECTED RNA POLYMERASE"/>
    <property type="match status" value="1"/>
</dbReference>
<dbReference type="PANTHER" id="PTHR19376:SF32">
    <property type="entry name" value="DNA-DIRECTED RNA POLYMERASE III SUBUNIT RPC1"/>
    <property type="match status" value="1"/>
</dbReference>
<dbReference type="Pfam" id="PF04983">
    <property type="entry name" value="RNA_pol_Rpb1_3"/>
    <property type="match status" value="1"/>
</dbReference>
<dbReference type="Pfam" id="PF05000">
    <property type="entry name" value="RNA_pol_Rpb1_4"/>
    <property type="match status" value="1"/>
</dbReference>
<dbReference type="Pfam" id="PF04998">
    <property type="entry name" value="RNA_pol_Rpb1_5"/>
    <property type="match status" value="1"/>
</dbReference>
<dbReference type="SUPFAM" id="SSF64484">
    <property type="entry name" value="beta and beta-prime subunits of DNA dependent RNA-polymerase"/>
    <property type="match status" value="1"/>
</dbReference>
<accession>P15349</accession>
<evidence type="ECO:0000255" key="1">
    <source>
        <dbReference type="HAMAP-Rule" id="MF_00863"/>
    </source>
</evidence>
<evidence type="ECO:0000256" key="2">
    <source>
        <dbReference type="SAM" id="MobiDB-lite"/>
    </source>
</evidence>
<evidence type="ECO:0000305" key="3"/>
<comment type="function">
    <text evidence="1">DNA-dependent RNA polymerase (RNAP) catalyzes the transcription of DNA into RNA using the four ribonucleoside triphosphates as substrates. Forms the clamp head domain.</text>
</comment>
<comment type="catalytic activity">
    <reaction evidence="1">
        <text>RNA(n) + a ribonucleoside 5'-triphosphate = RNA(n+1) + diphosphate</text>
        <dbReference type="Rhea" id="RHEA:21248"/>
        <dbReference type="Rhea" id="RHEA-COMP:14527"/>
        <dbReference type="Rhea" id="RHEA-COMP:17342"/>
        <dbReference type="ChEBI" id="CHEBI:33019"/>
        <dbReference type="ChEBI" id="CHEBI:61557"/>
        <dbReference type="ChEBI" id="CHEBI:140395"/>
        <dbReference type="EC" id="2.7.7.6"/>
    </reaction>
</comment>
<comment type="subunit">
    <text evidence="1">Part of the RNA polymerase complex.</text>
</comment>
<comment type="subcellular location">
    <subcellularLocation>
        <location evidence="1">Cytoplasm</location>
    </subcellularLocation>
</comment>
<comment type="similarity">
    <text evidence="1">Belongs to the RNA polymerase beta' chain family.</text>
</comment>
<sequence length="349" mass="38074">EFTSSTGDTVMIDEGALVEGTIDEDAVGAFGGEIVDTIVKQYGETRARVFINEVASLAMRAIMHFGFSIGIDDESISDAAEAQIDESMDNAYERVQELIDTYENDDLESLPGRTVDETLEMKIMQTLGKARDSAGDIADEHFDDDNPAVIMAESGARGSMLNLTQMAACVGQQAVRGERINRGYEGRTLSHFKPGDLSAEAHGFVEDSYRSGLTPREFFFHAMGGREGLVDTAVRTSKSGYLQRRLINALSELETQYDGTVRDTSDNIVQFEFGEDNTSPVKVSSSDDNEIDVDEIADRVLAAEFEDEGEEFAGEQATNLSESADDRMDRDRPSSHGAAPIDVPEVGDD</sequence>
<protein>
    <recommendedName>
        <fullName evidence="1">DNA-directed RNA polymerase subunit Rpo1N</fullName>
        <ecNumber evidence="1">2.7.7.6</ecNumber>
    </recommendedName>
    <alternativeName>
        <fullName evidence="1">DNA-directed RNA polymerase subunit A'</fullName>
    </alternativeName>
</protein>
<feature type="chain" id="PRO_0000074002" description="DNA-directed RNA polymerase subunit Rpo1N">
    <location>
        <begin position="1" status="less than"/>
        <end position="349"/>
    </location>
</feature>
<feature type="region of interest" description="Disordered" evidence="2">
    <location>
        <begin position="306"/>
        <end position="349"/>
    </location>
</feature>
<feature type="compositionally biased region" description="Basic and acidic residues" evidence="2">
    <location>
        <begin position="324"/>
        <end position="334"/>
    </location>
</feature>
<feature type="sequence conflict" description="In Ref. 1; CAA40431." evidence="3" ref="1">
    <location>
        <begin position="336"/>
        <end position="339"/>
    </location>
</feature>
<feature type="non-terminal residue">
    <location>
        <position position="1"/>
    </location>
</feature>
<proteinExistence type="inferred from homology"/>
<gene>
    <name evidence="1" type="primary">rpo1N</name>
    <name evidence="1" type="synonym">rpoA1</name>
</gene>
<name>RPO1N_HALMO</name>
<reference key="1">
    <citation type="journal article" date="1989" name="J. Mol. Biol.">
        <title>Sequence, organization, transcription and evolution of RNA polymerase subunit genes from the archaebacterial extreme halophiles Halobacterium halobium and Halococcus morrhuae.</title>
        <authorList>
            <person name="Leffers H."/>
            <person name="Gropp F."/>
            <person name="Lottspeich F."/>
            <person name="Zillig W."/>
            <person name="Garrett R.A."/>
        </authorList>
    </citation>
    <scope>NUCLEOTIDE SEQUENCE [GENOMIC DNA]</scope>
    <source>
        <strain>ATCC 17082 / DSM 1307 / JCM 8876 / NBRC 14719 / NCIMB 787</strain>
    </source>
</reference>
<keyword id="KW-0963">Cytoplasm</keyword>
<keyword id="KW-0238">DNA-binding</keyword>
<keyword id="KW-0240">DNA-directed RNA polymerase</keyword>
<keyword id="KW-0548">Nucleotidyltransferase</keyword>
<keyword id="KW-0804">Transcription</keyword>
<keyword id="KW-0808">Transferase</keyword>
<organism>
    <name type="scientific">Halococcus morrhuae</name>
    <name type="common">Micrococcus morrhuae</name>
    <dbReference type="NCBI Taxonomy" id="2250"/>
    <lineage>
        <taxon>Archaea</taxon>
        <taxon>Methanobacteriati</taxon>
        <taxon>Methanobacteriota</taxon>
        <taxon>Stenosarchaea group</taxon>
        <taxon>Halobacteria</taxon>
        <taxon>Halobacteriales</taxon>
        <taxon>Halococcaceae</taxon>
        <taxon>Halococcus</taxon>
    </lineage>
</organism>